<protein>
    <recommendedName>
        <fullName evidence="1">UvrABC system protein C</fullName>
        <shortName evidence="1">Protein UvrC</shortName>
    </recommendedName>
    <alternativeName>
        <fullName evidence="1">Excinuclease ABC subunit C</fullName>
    </alternativeName>
</protein>
<sequence length="614" mass="67553">MTDVPAPAFDGKAFAAQLSTAPGVYRMYAADDTLLYVGKARALRNRVGSYFNGSPKNARIMSMISQIVRMDVTVTRSEAEALLLENQLIKSLSPRYNVSLRDDKTYPHVLLTREDWPRIALHRGPRAIPGRYFGPYPGVTAVRETLNLMHKLFKLRSCEDSVFRNRSRPCLQYQIGRCSAPCVELVAPAEYAESVRRAALFLEGKSDELTRELGEQMQAASEALEFEQAARLRDLISSLRSMQTRQYVDGRAADLDVLAVAMQGSQACVLLLAFRDGRNLGTRPFFPRTNGEESPEEVLAAFVSQYYIEFEPPREILLDREIPDADLLVAALSASAERKVQLKWNVRGERAGYVELASRNAQLTLATELNSRNAQHARSDALREMLGLAEPVKRVECFDISHTLGEATVASCVVFDAAGPVRAQYRRFNISGIEPGDDYAAMRQAIDRRFRRAVEEQGVLPDVLLIDGGAGQLAQAQAALADLGVEGVLLVGVAKGVERRAGHEALVMPDGRELRPGAANPALQFIQQVRDEAHRFAITGHRGRRQKARMTSKLEDIPGIGPRRRASLLKHFGGLVGLKAAGEAEIAKVEGINDALAARIYANLHGLATPDAAE</sequence>
<keyword id="KW-0963">Cytoplasm</keyword>
<keyword id="KW-0227">DNA damage</keyword>
<keyword id="KW-0228">DNA excision</keyword>
<keyword id="KW-0234">DNA repair</keyword>
<keyword id="KW-0267">Excision nuclease</keyword>
<keyword id="KW-1185">Reference proteome</keyword>
<keyword id="KW-0742">SOS response</keyword>
<name>UVRC_STRMK</name>
<accession>B2FK26</accession>
<comment type="function">
    <text evidence="1">The UvrABC repair system catalyzes the recognition and processing of DNA lesions. UvrC both incises the 5' and 3' sides of the lesion. The N-terminal half is responsible for the 3' incision and the C-terminal half is responsible for the 5' incision.</text>
</comment>
<comment type="subunit">
    <text evidence="1">Interacts with UvrB in an incision complex.</text>
</comment>
<comment type="subcellular location">
    <subcellularLocation>
        <location evidence="1">Cytoplasm</location>
    </subcellularLocation>
</comment>
<comment type="similarity">
    <text evidence="1">Belongs to the UvrC family.</text>
</comment>
<evidence type="ECO:0000255" key="1">
    <source>
        <dbReference type="HAMAP-Rule" id="MF_00203"/>
    </source>
</evidence>
<gene>
    <name evidence="1" type="primary">uvrC</name>
    <name type="ordered locus">Smlt1645</name>
</gene>
<feature type="chain" id="PRO_1000099523" description="UvrABC system protein C">
    <location>
        <begin position="1"/>
        <end position="614"/>
    </location>
</feature>
<feature type="domain" description="GIY-YIG" evidence="1">
    <location>
        <begin position="20"/>
        <end position="98"/>
    </location>
</feature>
<feature type="domain" description="UVR" evidence="1">
    <location>
        <begin position="207"/>
        <end position="242"/>
    </location>
</feature>
<dbReference type="EMBL" id="AM743169">
    <property type="protein sequence ID" value="CAQ45176.1"/>
    <property type="molecule type" value="Genomic_DNA"/>
</dbReference>
<dbReference type="RefSeq" id="WP_005408879.1">
    <property type="nucleotide sequence ID" value="NC_010943.1"/>
</dbReference>
<dbReference type="SMR" id="B2FK26"/>
<dbReference type="EnsemblBacteria" id="CAQ45176">
    <property type="protein sequence ID" value="CAQ45176"/>
    <property type="gene ID" value="Smlt1645"/>
</dbReference>
<dbReference type="GeneID" id="93832824"/>
<dbReference type="KEGG" id="sml:Smlt1645"/>
<dbReference type="eggNOG" id="COG0322">
    <property type="taxonomic scope" value="Bacteria"/>
</dbReference>
<dbReference type="HOGENOM" id="CLU_014841_3_0_6"/>
<dbReference type="Proteomes" id="UP000008840">
    <property type="component" value="Chromosome"/>
</dbReference>
<dbReference type="GO" id="GO:0005737">
    <property type="term" value="C:cytoplasm"/>
    <property type="evidence" value="ECO:0007669"/>
    <property type="project" value="UniProtKB-SubCell"/>
</dbReference>
<dbReference type="GO" id="GO:0009380">
    <property type="term" value="C:excinuclease repair complex"/>
    <property type="evidence" value="ECO:0007669"/>
    <property type="project" value="InterPro"/>
</dbReference>
<dbReference type="GO" id="GO:0003677">
    <property type="term" value="F:DNA binding"/>
    <property type="evidence" value="ECO:0007669"/>
    <property type="project" value="UniProtKB-UniRule"/>
</dbReference>
<dbReference type="GO" id="GO:0009381">
    <property type="term" value="F:excinuclease ABC activity"/>
    <property type="evidence" value="ECO:0007669"/>
    <property type="project" value="UniProtKB-UniRule"/>
</dbReference>
<dbReference type="GO" id="GO:0006289">
    <property type="term" value="P:nucleotide-excision repair"/>
    <property type="evidence" value="ECO:0007669"/>
    <property type="project" value="UniProtKB-UniRule"/>
</dbReference>
<dbReference type="GO" id="GO:0009432">
    <property type="term" value="P:SOS response"/>
    <property type="evidence" value="ECO:0007669"/>
    <property type="project" value="UniProtKB-UniRule"/>
</dbReference>
<dbReference type="CDD" id="cd10434">
    <property type="entry name" value="GIY-YIG_UvrC_Cho"/>
    <property type="match status" value="1"/>
</dbReference>
<dbReference type="FunFam" id="1.10.150.20:FF:000005">
    <property type="entry name" value="UvrABC system protein C"/>
    <property type="match status" value="1"/>
</dbReference>
<dbReference type="FunFam" id="3.30.420.340:FF:000001">
    <property type="entry name" value="UvrABC system protein C"/>
    <property type="match status" value="1"/>
</dbReference>
<dbReference type="FunFam" id="3.40.1440.10:FF:000001">
    <property type="entry name" value="UvrABC system protein C"/>
    <property type="match status" value="1"/>
</dbReference>
<dbReference type="Gene3D" id="1.10.150.20">
    <property type="entry name" value="5' to 3' exonuclease, C-terminal subdomain"/>
    <property type="match status" value="1"/>
</dbReference>
<dbReference type="Gene3D" id="3.40.1440.10">
    <property type="entry name" value="GIY-YIG endonuclease"/>
    <property type="match status" value="1"/>
</dbReference>
<dbReference type="Gene3D" id="4.10.860.10">
    <property type="entry name" value="UVR domain"/>
    <property type="match status" value="1"/>
</dbReference>
<dbReference type="Gene3D" id="3.30.420.340">
    <property type="entry name" value="UvrC, RNAse H endonuclease domain"/>
    <property type="match status" value="1"/>
</dbReference>
<dbReference type="HAMAP" id="MF_00203">
    <property type="entry name" value="UvrC"/>
    <property type="match status" value="1"/>
</dbReference>
<dbReference type="InterPro" id="IPR000305">
    <property type="entry name" value="GIY-YIG_endonuc"/>
</dbReference>
<dbReference type="InterPro" id="IPR035901">
    <property type="entry name" value="GIY-YIG_endonuc_sf"/>
</dbReference>
<dbReference type="InterPro" id="IPR047296">
    <property type="entry name" value="GIY-YIG_UvrC_Cho"/>
</dbReference>
<dbReference type="InterPro" id="IPR003583">
    <property type="entry name" value="Hlx-hairpin-Hlx_DNA-bd_motif"/>
</dbReference>
<dbReference type="InterPro" id="IPR010994">
    <property type="entry name" value="RuvA_2-like"/>
</dbReference>
<dbReference type="InterPro" id="IPR001943">
    <property type="entry name" value="UVR_dom"/>
</dbReference>
<dbReference type="InterPro" id="IPR036876">
    <property type="entry name" value="UVR_dom_sf"/>
</dbReference>
<dbReference type="InterPro" id="IPR050066">
    <property type="entry name" value="UvrABC_protein_C"/>
</dbReference>
<dbReference type="InterPro" id="IPR004791">
    <property type="entry name" value="UvrC"/>
</dbReference>
<dbReference type="InterPro" id="IPR001162">
    <property type="entry name" value="UvrC_RNase_H_dom"/>
</dbReference>
<dbReference type="InterPro" id="IPR038476">
    <property type="entry name" value="UvrC_RNase_H_dom_sf"/>
</dbReference>
<dbReference type="NCBIfam" id="TIGR00194">
    <property type="entry name" value="uvrC"/>
    <property type="match status" value="1"/>
</dbReference>
<dbReference type="PANTHER" id="PTHR30562:SF1">
    <property type="entry name" value="UVRABC SYSTEM PROTEIN C"/>
    <property type="match status" value="1"/>
</dbReference>
<dbReference type="PANTHER" id="PTHR30562">
    <property type="entry name" value="UVRC/OXIDOREDUCTASE"/>
    <property type="match status" value="1"/>
</dbReference>
<dbReference type="Pfam" id="PF01541">
    <property type="entry name" value="GIY-YIG"/>
    <property type="match status" value="1"/>
</dbReference>
<dbReference type="Pfam" id="PF14520">
    <property type="entry name" value="HHH_5"/>
    <property type="match status" value="1"/>
</dbReference>
<dbReference type="Pfam" id="PF02151">
    <property type="entry name" value="UVR"/>
    <property type="match status" value="1"/>
</dbReference>
<dbReference type="Pfam" id="PF22920">
    <property type="entry name" value="UvrC_RNaseH"/>
    <property type="match status" value="1"/>
</dbReference>
<dbReference type="Pfam" id="PF08459">
    <property type="entry name" value="UvrC_RNaseH_dom"/>
    <property type="match status" value="1"/>
</dbReference>
<dbReference type="SMART" id="SM00465">
    <property type="entry name" value="GIYc"/>
    <property type="match status" value="1"/>
</dbReference>
<dbReference type="SMART" id="SM00278">
    <property type="entry name" value="HhH1"/>
    <property type="match status" value="2"/>
</dbReference>
<dbReference type="SUPFAM" id="SSF46600">
    <property type="entry name" value="C-terminal UvrC-binding domain of UvrB"/>
    <property type="match status" value="1"/>
</dbReference>
<dbReference type="SUPFAM" id="SSF82771">
    <property type="entry name" value="GIY-YIG endonuclease"/>
    <property type="match status" value="1"/>
</dbReference>
<dbReference type="SUPFAM" id="SSF47781">
    <property type="entry name" value="RuvA domain 2-like"/>
    <property type="match status" value="1"/>
</dbReference>
<dbReference type="PROSITE" id="PS50164">
    <property type="entry name" value="GIY_YIG"/>
    <property type="match status" value="1"/>
</dbReference>
<dbReference type="PROSITE" id="PS50151">
    <property type="entry name" value="UVR"/>
    <property type="match status" value="1"/>
</dbReference>
<dbReference type="PROSITE" id="PS50165">
    <property type="entry name" value="UVRC"/>
    <property type="match status" value="1"/>
</dbReference>
<reference key="1">
    <citation type="journal article" date="2008" name="Genome Biol.">
        <title>The complete genome, comparative and functional analysis of Stenotrophomonas maltophilia reveals an organism heavily shielded by drug resistance determinants.</title>
        <authorList>
            <person name="Crossman L.C."/>
            <person name="Gould V.C."/>
            <person name="Dow J.M."/>
            <person name="Vernikos G.S."/>
            <person name="Okazaki A."/>
            <person name="Sebaihia M."/>
            <person name="Saunders D."/>
            <person name="Arrowsmith C."/>
            <person name="Carver T."/>
            <person name="Peters N."/>
            <person name="Adlem E."/>
            <person name="Kerhornou A."/>
            <person name="Lord A."/>
            <person name="Murphy L."/>
            <person name="Seeger K."/>
            <person name="Squares R."/>
            <person name="Rutter S."/>
            <person name="Quail M.A."/>
            <person name="Rajandream M.A."/>
            <person name="Harris D."/>
            <person name="Churcher C."/>
            <person name="Bentley S.D."/>
            <person name="Parkhill J."/>
            <person name="Thomson N.R."/>
            <person name="Avison M.B."/>
        </authorList>
    </citation>
    <scope>NUCLEOTIDE SEQUENCE [LARGE SCALE GENOMIC DNA]</scope>
    <source>
        <strain>K279a</strain>
    </source>
</reference>
<proteinExistence type="inferred from homology"/>
<organism>
    <name type="scientific">Stenotrophomonas maltophilia (strain K279a)</name>
    <dbReference type="NCBI Taxonomy" id="522373"/>
    <lineage>
        <taxon>Bacteria</taxon>
        <taxon>Pseudomonadati</taxon>
        <taxon>Pseudomonadota</taxon>
        <taxon>Gammaproteobacteria</taxon>
        <taxon>Lysobacterales</taxon>
        <taxon>Lysobacteraceae</taxon>
        <taxon>Stenotrophomonas</taxon>
        <taxon>Stenotrophomonas maltophilia group</taxon>
    </lineage>
</organism>